<proteinExistence type="inferred from homology"/>
<organism>
    <name type="scientific">Hylobates lar</name>
    <name type="common">Lar gibbon</name>
    <name type="synonym">White-handed gibbon</name>
    <dbReference type="NCBI Taxonomy" id="9580"/>
    <lineage>
        <taxon>Eukaryota</taxon>
        <taxon>Metazoa</taxon>
        <taxon>Chordata</taxon>
        <taxon>Craniata</taxon>
        <taxon>Vertebrata</taxon>
        <taxon>Euteleostomi</taxon>
        <taxon>Mammalia</taxon>
        <taxon>Eutheria</taxon>
        <taxon>Euarchontoglires</taxon>
        <taxon>Primates</taxon>
        <taxon>Haplorrhini</taxon>
        <taxon>Catarrhini</taxon>
        <taxon>Hylobatidae</taxon>
        <taxon>Hylobates</taxon>
    </lineage>
</organism>
<protein>
    <recommendedName>
        <fullName evidence="2">4-galactosyl-N-acetylglucosaminide 3-alpha-L-fucosyltransferase FUT5</fullName>
        <ecNumber evidence="2">2.4.1.152</ecNumber>
    </recommendedName>
    <alternativeName>
        <fullName evidence="2">3-galactosyl-N-acetylglucosaminide 4-alpha-L-fucosyltransferase FUT5</fullName>
        <ecNumber evidence="2">2.4.1.65</ecNumber>
    </alternativeName>
    <alternativeName>
        <fullName>Fucosyltransferase 5</fullName>
    </alternativeName>
    <alternativeName>
        <fullName>Fucosyltransferase V</fullName>
        <shortName evidence="2">Fuc-TV</shortName>
        <shortName>FucT-V</shortName>
    </alternativeName>
    <alternativeName>
        <fullName>Galactoside 3-L-fucosyltransferase</fullName>
    </alternativeName>
</protein>
<comment type="function">
    <text evidence="2">Catalyzes preferentially the transfer of L-fucose, from a guanosine diphosphate-beta-L-fucose, to the N-acetyl-beta-D-glucosamine (GlcNAc) of an N-acetyllactosamine unit (type 2 chain) of an oligosaccharide, or a glycoprotein- and a glycolipid-linked N-acetyllactosamine unit via an alpha (1,3) linkage and participates in the surface expression of VIM-2, Lewis X/SSEA-1 and sialyl Lewis X antigens. Preferentially transfers fucose to the GlcNAc of an internal N-acetyllactosamine unit of a poly-N-acetyllactosamine chain acceptor substrate. Also catalyzes to a lesser extend the transfer of L-fucose to the GlcNAc of a type 1 (beta-D-galactosyl-(1-&gt;3)-N-acetyl-beta-D-glucosaminyl) or H-type 1 (alpha-L-Fuc-(1-&gt;2)-beta-D-Gal-(1-&gt;3)-D-GlcNAc) chain oligosaccharide via an alpha (1,4) linkage. Preferentially catalyzes sialylated type 2 oligosaccharide acceptors over neutral type 2 or H type 2 (alpha-L-Fuc-(1-&gt;2)-beta-D-Gal-(1-&gt;4)-D-GlcNAc) oligosaccharide acceptors. Lactose-based structures are also acceptor substrates.</text>
</comment>
<comment type="catalytic activity">
    <reaction evidence="2">
        <text>a beta-D-galactosyl-(1-&gt;3)-N-acetyl-beta-D-glucosaminyl derivative + GDP-beta-L-fucose = a beta-D-galactosyl-(1-&gt;3)-[alpha-L-fucosyl-(1-&gt;4)]-N-acetyl-beta-D-glucosaminyl derivative + GDP + H(+)</text>
        <dbReference type="Rhea" id="RHEA:23628"/>
        <dbReference type="ChEBI" id="CHEBI:15378"/>
        <dbReference type="ChEBI" id="CHEBI:57273"/>
        <dbReference type="ChEBI" id="CHEBI:58189"/>
        <dbReference type="ChEBI" id="CHEBI:133506"/>
        <dbReference type="ChEBI" id="CHEBI:140304"/>
        <dbReference type="EC" id="2.4.1.65"/>
    </reaction>
    <physiologicalReaction direction="left-to-right" evidence="2">
        <dbReference type="Rhea" id="RHEA:23629"/>
    </physiologicalReaction>
</comment>
<comment type="catalytic activity">
    <reaction evidence="2">
        <text>an N-acetyl-alpha-neuraminyl-(2-&gt;3)-beta-D-galactosyl-(1-&gt;4)-N-acetyl-beta-D-glucosaminyl derivative + GDP-beta-L-fucose = an alpha-Neu5Ac-(2-&gt;3)-beta-D-Gal-(1-&gt;4)-[alpha-L-Fuc-(1-&gt;3)]-beta-D-GlcNAc derivative + GDP + H(+)</text>
        <dbReference type="Rhea" id="RHEA:56076"/>
        <dbReference type="ChEBI" id="CHEBI:15378"/>
        <dbReference type="ChEBI" id="CHEBI:57273"/>
        <dbReference type="ChEBI" id="CHEBI:58189"/>
        <dbReference type="ChEBI" id="CHEBI:136545"/>
        <dbReference type="ChEBI" id="CHEBI:139509"/>
    </reaction>
    <physiologicalReaction direction="left-to-right" evidence="2">
        <dbReference type="Rhea" id="RHEA:56077"/>
    </physiologicalReaction>
</comment>
<comment type="catalytic activity">
    <reaction evidence="2">
        <text>an alpha-Neu5Ac-(2-&gt;3)-beta-D-Gal-(1-&gt;4)-beta-D-GlcNAc-(1-&gt;3)-beta-D-Gal-(1-&gt;4)-[alpha-L-Fuc-(1-&gt;3)]-beta-D-GlcNAc derivative + GDP-beta-L-fucose = an alpha-Neu5Ac-(2-&gt;3)-beta-D-Gal-(1-&gt;4)-[alpha-L-Fuc-(1-&gt;3)]-beta-D-GlcNAc-(1-&gt;3)-beta-D-Gal-(1-&gt;4)-[alpha-L-Fuc-(1-&gt;3)]-beta-D-GlcNAc derivative + GDP + H(+)</text>
        <dbReference type="Rhea" id="RHEA:52864"/>
        <dbReference type="ChEBI" id="CHEBI:15378"/>
        <dbReference type="ChEBI" id="CHEBI:57273"/>
        <dbReference type="ChEBI" id="CHEBI:58189"/>
        <dbReference type="ChEBI" id="CHEBI:145342"/>
        <dbReference type="ChEBI" id="CHEBI:145343"/>
    </reaction>
    <physiologicalReaction direction="left-to-right" evidence="2">
        <dbReference type="Rhea" id="RHEA:52865"/>
    </physiologicalReaction>
</comment>
<comment type="catalytic activity">
    <reaction evidence="2">
        <text>a beta-D-galactosyl-(1-&gt;4)-N-acetyl-beta-D-glucosaminyl derivative + GDP-beta-L-fucose = a beta-D-galactosyl-(1-&gt;4)-[alpha-L-fucosyl-(1-&gt;3)]-N-acetyl-beta-D-glucosaminyl derivative + GDP + H(+)</text>
        <dbReference type="Rhea" id="RHEA:14257"/>
        <dbReference type="ChEBI" id="CHEBI:15378"/>
        <dbReference type="ChEBI" id="CHEBI:57273"/>
        <dbReference type="ChEBI" id="CHEBI:58189"/>
        <dbReference type="ChEBI" id="CHEBI:133507"/>
        <dbReference type="ChEBI" id="CHEBI:137941"/>
        <dbReference type="EC" id="2.4.1.152"/>
    </reaction>
    <physiologicalReaction direction="left-to-right" evidence="2">
        <dbReference type="Rhea" id="RHEA:14258"/>
    </physiologicalReaction>
</comment>
<comment type="catalytic activity">
    <reaction evidence="2">
        <text>a neolactoside nLc4Cer + GDP-beta-L-fucose = a neolactoside III(3)-alpha-Fuc-nLc4Cer + GDP + H(+)</text>
        <dbReference type="Rhea" id="RHEA:48376"/>
        <dbReference type="ChEBI" id="CHEBI:15378"/>
        <dbReference type="ChEBI" id="CHEBI:57273"/>
        <dbReference type="ChEBI" id="CHEBI:58189"/>
        <dbReference type="ChEBI" id="CHEBI:90376"/>
        <dbReference type="ChEBI" id="CHEBI:90379"/>
    </reaction>
    <physiologicalReaction direction="left-to-right" evidence="2">
        <dbReference type="Rhea" id="RHEA:48377"/>
    </physiologicalReaction>
</comment>
<comment type="catalytic activity">
    <reaction evidence="2">
        <text>a neolactoside nLc6Cer + GDP-beta-L-fucose = beta-D-galactosyl-(1-&gt;4)-N-acetyl-beta-D-glucosaminyl-(1-&gt;3)-beta-D-galactosyl-(1-&gt;4)-[alpha-L-fucosyl-(1-&gt;3)]-N-acetyl-beta-D-glucosaminyl-(1-&gt;3)-beta-D-galactosyl-(1-&gt;4)-beta-D-glucosyl-(1&lt;-&gt;1')-ceramide + GDP + H(+)</text>
        <dbReference type="Rhea" id="RHEA:48364"/>
        <dbReference type="ChEBI" id="CHEBI:15378"/>
        <dbReference type="ChEBI" id="CHEBI:57273"/>
        <dbReference type="ChEBI" id="CHEBI:58189"/>
        <dbReference type="ChEBI" id="CHEBI:90357"/>
        <dbReference type="ChEBI" id="CHEBI:90358"/>
    </reaction>
    <physiologicalReaction direction="left-to-right" evidence="2">
        <dbReference type="Rhea" id="RHEA:48365"/>
    </physiologicalReaction>
</comment>
<comment type="catalytic activity">
    <reaction evidence="2">
        <text>a neolactoside nLc6Cer(d18:1(4E)) + GDP-beta-L-fucose = a neolactoside III(3)-alpha-Fuc-nLc6Cer(d18:1(4E)) + GDP + H(+)</text>
        <dbReference type="Rhea" id="RHEA:48336"/>
        <dbReference type="ChEBI" id="CHEBI:15378"/>
        <dbReference type="ChEBI" id="CHEBI:57273"/>
        <dbReference type="ChEBI" id="CHEBI:58189"/>
        <dbReference type="ChEBI" id="CHEBI:61610"/>
        <dbReference type="ChEBI" id="CHEBI:90307"/>
    </reaction>
    <physiologicalReaction direction="left-to-right" evidence="2">
        <dbReference type="Rhea" id="RHEA:48337"/>
    </physiologicalReaction>
</comment>
<comment type="catalytic activity">
    <reaction evidence="2">
        <text>a neolactoside nLc4Cer(d18:1(4E)) + GDP-beta-L-fucose = a neolactoside III(3)-alpha-Fuc-nLc4Cer(d18:1(4E)) + GDP + H(+)</text>
        <dbReference type="Rhea" id="RHEA:48332"/>
        <dbReference type="ChEBI" id="CHEBI:15378"/>
        <dbReference type="ChEBI" id="CHEBI:17006"/>
        <dbReference type="ChEBI" id="CHEBI:57273"/>
        <dbReference type="ChEBI" id="CHEBI:58189"/>
        <dbReference type="ChEBI" id="CHEBI:77240"/>
    </reaction>
    <physiologicalReaction direction="left-to-right" evidence="2">
        <dbReference type="Rhea" id="RHEA:48333"/>
    </physiologicalReaction>
</comment>
<comment type="catalytic activity">
    <reaction evidence="2">
        <text>a neolactoside VI(3)-alpha-NeuNAc-nLc6Cer + GDP-beta-L-fucose = a neolactoside VI(3)-alpha-NeuAc,III(3)-alphaFuc-nLc6Cer + GDP + H(+)</text>
        <dbReference type="Rhea" id="RHEA:48352"/>
        <dbReference type="ChEBI" id="CHEBI:15378"/>
        <dbReference type="ChEBI" id="CHEBI:57273"/>
        <dbReference type="ChEBI" id="CHEBI:58189"/>
        <dbReference type="ChEBI" id="CHEBI:90335"/>
        <dbReference type="ChEBI" id="CHEBI:90339"/>
    </reaction>
    <physiologicalReaction direction="left-to-right" evidence="2">
        <dbReference type="Rhea" id="RHEA:48353"/>
    </physiologicalReaction>
</comment>
<comment type="catalytic activity">
    <reaction evidence="2">
        <text>beta-D-galactosyl-(1-&gt;4)-N-acetyl-D-glucosamine + GDP-beta-L-fucose = beta-D-galactosyl-(1-&gt;4)-[alpha-L-fucosyl-(1-&gt;3)]-N-acetyl-D-glucosamine + GDP + H(+)</text>
        <dbReference type="Rhea" id="RHEA:62824"/>
        <dbReference type="ChEBI" id="CHEBI:15378"/>
        <dbReference type="ChEBI" id="CHEBI:57273"/>
        <dbReference type="ChEBI" id="CHEBI:58189"/>
        <dbReference type="ChEBI" id="CHEBI:60152"/>
        <dbReference type="ChEBI" id="CHEBI:62287"/>
    </reaction>
    <physiologicalReaction direction="left-to-right" evidence="2">
        <dbReference type="Rhea" id="RHEA:62825"/>
    </physiologicalReaction>
</comment>
<comment type="catalytic activity">
    <reaction evidence="2">
        <text>N-acetyl-alpha-neuraminosyl-(2-&gt;3)-beta-D-galactosyl-(1-&gt;4)-N-acetyl-beta-D-glucosamine + GDP-beta-L-fucose = N-acetyl-alpha-neuraminosyl-(2-&gt;3)-beta-D-galactosyl-(1-&gt;4)-[alpha-L-fucosyl-(1-&gt;3)]-N-acetyl-beta-D-glucosamine + GDP + H(+)</text>
        <dbReference type="Rhea" id="RHEA:62836"/>
        <dbReference type="ChEBI" id="CHEBI:15378"/>
        <dbReference type="ChEBI" id="CHEBI:57273"/>
        <dbReference type="ChEBI" id="CHEBI:58189"/>
        <dbReference type="ChEBI" id="CHEBI:145937"/>
        <dbReference type="ChEBI" id="CHEBI:145938"/>
    </reaction>
    <physiologicalReaction direction="left-to-right" evidence="2">
        <dbReference type="Rhea" id="RHEA:62837"/>
    </physiologicalReaction>
</comment>
<comment type="catalytic activity">
    <reaction evidence="2">
        <text>alpha-L-Fuc-(1-&gt;2)-beta-D-Gal-(1-&gt;4)-D-GlcNAc + GDP-beta-L-fucose = alpha-L-Fuc-(1-&gt;2)-beta-D-Gal-(1-&gt;4)-[alpha-L-Fuc-(1-&gt;3)]-D-GlcNAc + GDP + H(+)</text>
        <dbReference type="Rhea" id="RHEA:62900"/>
        <dbReference type="ChEBI" id="CHEBI:15378"/>
        <dbReference type="ChEBI" id="CHEBI:57273"/>
        <dbReference type="ChEBI" id="CHEBI:58189"/>
        <dbReference type="ChEBI" id="CHEBI:62263"/>
        <dbReference type="ChEBI" id="CHEBI:62507"/>
    </reaction>
</comment>
<comment type="catalytic activity">
    <reaction evidence="2">
        <text>an alpha-Neu5Ac-(2-&gt;3)-beta-D-Gal-(1-&gt;3)-D-GlcNAc derivative + GDP-beta-L-fucose = an alpha-Neu5Ac-(2-&gt;3)-beta-D-Gal-(1-&gt;3)-[alpha-L-Fuc-(1-&gt;4)]-beta-D-GlcNAc derivative + GDP + H(+)</text>
        <dbReference type="Rhea" id="RHEA:62904"/>
        <dbReference type="ChEBI" id="CHEBI:15378"/>
        <dbReference type="ChEBI" id="CHEBI:57273"/>
        <dbReference type="ChEBI" id="CHEBI:58189"/>
        <dbReference type="ChEBI" id="CHEBI:146021"/>
        <dbReference type="ChEBI" id="CHEBI:146022"/>
    </reaction>
    <physiologicalReaction direction="left-to-right" evidence="2">
        <dbReference type="Rhea" id="RHEA:62905"/>
    </physiologicalReaction>
</comment>
<comment type="pathway">
    <text evidence="2">Protein modification; protein glycosylation.</text>
</comment>
<comment type="subcellular location">
    <subcellularLocation>
        <location evidence="1">Golgi apparatus</location>
        <location evidence="1">Golgi stack membrane</location>
        <topology evidence="1">Single-pass type II membrane protein</topology>
    </subcellularLocation>
    <text evidence="1">Membrane-bound form in trans cisternae of Golgi.</text>
</comment>
<comment type="similarity">
    <text evidence="4">Belongs to the glycosyltransferase 10 family.</text>
</comment>
<keyword id="KW-0325">Glycoprotein</keyword>
<keyword id="KW-0328">Glycosyltransferase</keyword>
<keyword id="KW-0333">Golgi apparatus</keyword>
<keyword id="KW-0443">Lipid metabolism</keyword>
<keyword id="KW-0472">Membrane</keyword>
<keyword id="KW-0735">Signal-anchor</keyword>
<keyword id="KW-0808">Transferase</keyword>
<keyword id="KW-0812">Transmembrane</keyword>
<keyword id="KW-1133">Transmembrane helix</keyword>
<accession>Q8HYJ3</accession>
<reference key="1">
    <citation type="journal article" date="2004" name="Glycobiology">
        <title>Structure/function study of Lewis alpha3- and alpha3/4-fucosyltransferases: the alpha1,4 fucosylation requires an aromatic residue in the acceptor-binding domain.</title>
        <authorList>
            <person name="Dupuy F."/>
            <person name="Germot A."/>
            <person name="Julien R."/>
            <person name="Maftah A."/>
        </authorList>
    </citation>
    <scope>NUCLEOTIDE SEQUENCE [GENOMIC DNA]</scope>
</reference>
<name>FUT5_HYLLA</name>
<evidence type="ECO:0000250" key="1"/>
<evidence type="ECO:0000250" key="2">
    <source>
        <dbReference type="UniProtKB" id="Q11128"/>
    </source>
</evidence>
<evidence type="ECO:0000255" key="3"/>
<evidence type="ECO:0000305" key="4"/>
<feature type="chain" id="PRO_0000221106" description="4-galactosyl-N-acetylglucosaminide 3-alpha-L-fucosyltransferase FUT5">
    <location>
        <begin position="1"/>
        <end position="374"/>
    </location>
</feature>
<feature type="topological domain" description="Cytoplasmic" evidence="3">
    <location>
        <begin position="1"/>
        <end position="15"/>
    </location>
</feature>
<feature type="transmembrane region" description="Helical; Signal-anchor for type II membrane protein" evidence="3">
    <location>
        <begin position="16"/>
        <end position="34"/>
    </location>
</feature>
<feature type="topological domain" description="Lumenal" evidence="3">
    <location>
        <begin position="35"/>
        <end position="374"/>
    </location>
</feature>
<feature type="glycosylation site" description="N-linked (GlcNAc...) asparagine" evidence="3">
    <location>
        <position position="60"/>
    </location>
</feature>
<feature type="glycosylation site" description="N-linked (GlcNAc...) asparagine" evidence="3">
    <location>
        <position position="105"/>
    </location>
</feature>
<feature type="glycosylation site" description="N-linked (GlcNAc...) asparagine" evidence="3">
    <location>
        <position position="167"/>
    </location>
</feature>
<feature type="glycosylation site" description="N-linked (GlcNAc...) asparagine" evidence="3">
    <location>
        <position position="198"/>
    </location>
</feature>
<gene>
    <name evidence="2" type="primary">FUT5</name>
</gene>
<dbReference type="EC" id="2.4.1.152" evidence="2"/>
<dbReference type="EC" id="2.4.1.65" evidence="2"/>
<dbReference type="EMBL" id="AF515440">
    <property type="protein sequence ID" value="AAO15996.1"/>
    <property type="molecule type" value="Genomic_DNA"/>
</dbReference>
<dbReference type="SMR" id="Q8HYJ3"/>
<dbReference type="CAZy" id="GT10">
    <property type="family name" value="Glycosyltransferase Family 10"/>
</dbReference>
<dbReference type="GlyCosmos" id="Q8HYJ3">
    <property type="glycosylation" value="4 sites, No reported glycans"/>
</dbReference>
<dbReference type="BRENDA" id="2.4.1.65">
    <property type="organism ID" value="2731"/>
</dbReference>
<dbReference type="UniPathway" id="UPA00378"/>
<dbReference type="GO" id="GO:0032580">
    <property type="term" value="C:Golgi cisterna membrane"/>
    <property type="evidence" value="ECO:0007669"/>
    <property type="project" value="UniProtKB-SubCell"/>
</dbReference>
<dbReference type="GO" id="GO:0017060">
    <property type="term" value="F:3-galactosyl-N-acetylglucosaminide 4-alpha-L-fucosyltransferase activity"/>
    <property type="evidence" value="ECO:0000250"/>
    <property type="project" value="UniProtKB"/>
</dbReference>
<dbReference type="GO" id="GO:0017083">
    <property type="term" value="F:4-galactosyl-N-acetylglucosaminide 3-alpha-L-fucosyltransferase activity"/>
    <property type="evidence" value="ECO:0000250"/>
    <property type="project" value="UniProtKB"/>
</dbReference>
<dbReference type="GO" id="GO:0006672">
    <property type="term" value="P:ceramide metabolic process"/>
    <property type="evidence" value="ECO:0000250"/>
    <property type="project" value="UniProtKB"/>
</dbReference>
<dbReference type="GO" id="GO:0036065">
    <property type="term" value="P:fucosylation"/>
    <property type="evidence" value="ECO:0007669"/>
    <property type="project" value="TreeGrafter"/>
</dbReference>
<dbReference type="GO" id="GO:0009311">
    <property type="term" value="P:oligosaccharide metabolic process"/>
    <property type="evidence" value="ECO:0000250"/>
    <property type="project" value="UniProtKB"/>
</dbReference>
<dbReference type="GO" id="GO:0006487">
    <property type="term" value="P:protein N-linked glycosylation"/>
    <property type="evidence" value="ECO:0000250"/>
    <property type="project" value="UniProtKB"/>
</dbReference>
<dbReference type="GO" id="GO:0006493">
    <property type="term" value="P:protein O-linked glycosylation"/>
    <property type="evidence" value="ECO:0000250"/>
    <property type="project" value="UniProtKB"/>
</dbReference>
<dbReference type="FunFam" id="3.40.50.11660:FF:000001">
    <property type="entry name" value="alpha-(1,3)-fucosyltransferase 9"/>
    <property type="match status" value="1"/>
</dbReference>
<dbReference type="Gene3D" id="3.40.50.11660">
    <property type="entry name" value="Glycosyl transferase family 10, C-terminal domain"/>
    <property type="match status" value="1"/>
</dbReference>
<dbReference type="InterPro" id="IPR055270">
    <property type="entry name" value="Glyco_tran_10_C"/>
</dbReference>
<dbReference type="InterPro" id="IPR031481">
    <property type="entry name" value="Glyco_tran_10_N"/>
</dbReference>
<dbReference type="InterPro" id="IPR001503">
    <property type="entry name" value="Glyco_trans_10"/>
</dbReference>
<dbReference type="InterPro" id="IPR038577">
    <property type="entry name" value="GT10-like_C_sf"/>
</dbReference>
<dbReference type="PANTHER" id="PTHR11929:SF11">
    <property type="entry name" value="4-GALACTOSYL-N-ACETYLGLUCOSAMINIDE 3-ALPHA-L-FUCOSYLTRANSFERASE FUT5"/>
    <property type="match status" value="1"/>
</dbReference>
<dbReference type="PANTHER" id="PTHR11929">
    <property type="entry name" value="ALPHA- 1,3 -FUCOSYLTRANSFERASE"/>
    <property type="match status" value="1"/>
</dbReference>
<dbReference type="Pfam" id="PF17039">
    <property type="entry name" value="Glyco_tran_10_N"/>
    <property type="match status" value="1"/>
</dbReference>
<dbReference type="Pfam" id="PF00852">
    <property type="entry name" value="Glyco_transf_10"/>
    <property type="match status" value="1"/>
</dbReference>
<dbReference type="SUPFAM" id="SSF53756">
    <property type="entry name" value="UDP-Glycosyltransferase/glycogen phosphorylase"/>
    <property type="match status" value="1"/>
</dbReference>
<sequence>MDLLGAAKPQWPWRRCLAGLLFQLLVAVCFFSYLRVSRDDATGSPRPRLMAVEPVTGAPNGSRCQDSMAAPARPTLLILLWTWPFNTPVALPRCSEMVPGAADCNITADSNVYPQADAVIVHHWDIMRTPSANLPPPTRPQGQRWIWFSMESPSNCRHLEALDGYFNLTMSYRSDSDIFTPYGWLEPWSGQPAHPPLNLSAKTELVAWAVSNWEPGSARVRYYQSLQAHLKVDVYGRSHKPLPQGTMMETLSRYKFYLAFENSLHPDYITEKLWRNALEAWAVPVVLAPSRSNYERFLPPDAFIHVDDFQSPKDLARYLQELDKDHARYLSYFRWRETLRPRSFSWALDFCKACWKLQQESRYQTVRSIAAWFN</sequence>